<name>EFTS_PSEP1</name>
<comment type="function">
    <text evidence="1">Associates with the EF-Tu.GDP complex and induces the exchange of GDP to GTP. It remains bound to the aminoacyl-tRNA.EF-Tu.GTP complex up to the GTP hydrolysis stage on the ribosome.</text>
</comment>
<comment type="subcellular location">
    <subcellularLocation>
        <location evidence="1">Cytoplasm</location>
    </subcellularLocation>
</comment>
<comment type="similarity">
    <text evidence="1">Belongs to the EF-Ts family.</text>
</comment>
<organism>
    <name type="scientific">Pseudomonas putida (strain ATCC 700007 / DSM 6899 / JCM 31910 / BCRC 17059 / LMG 24140 / F1)</name>
    <dbReference type="NCBI Taxonomy" id="351746"/>
    <lineage>
        <taxon>Bacteria</taxon>
        <taxon>Pseudomonadati</taxon>
        <taxon>Pseudomonadota</taxon>
        <taxon>Gammaproteobacteria</taxon>
        <taxon>Pseudomonadales</taxon>
        <taxon>Pseudomonadaceae</taxon>
        <taxon>Pseudomonas</taxon>
    </lineage>
</organism>
<evidence type="ECO:0000255" key="1">
    <source>
        <dbReference type="HAMAP-Rule" id="MF_00050"/>
    </source>
</evidence>
<keyword id="KW-0963">Cytoplasm</keyword>
<keyword id="KW-0251">Elongation factor</keyword>
<keyword id="KW-0648">Protein biosynthesis</keyword>
<gene>
    <name evidence="1" type="primary">tsf</name>
    <name type="ordered locus">Pput_4185</name>
</gene>
<proteinExistence type="inferred from homology"/>
<protein>
    <recommendedName>
        <fullName evidence="1">Elongation factor Ts</fullName>
        <shortName evidence="1">EF-Ts</shortName>
    </recommendedName>
</protein>
<accession>A5W849</accession>
<reference key="1">
    <citation type="submission" date="2007-05" db="EMBL/GenBank/DDBJ databases">
        <title>Complete sequence of Pseudomonas putida F1.</title>
        <authorList>
            <consortium name="US DOE Joint Genome Institute"/>
            <person name="Copeland A."/>
            <person name="Lucas S."/>
            <person name="Lapidus A."/>
            <person name="Barry K."/>
            <person name="Detter J.C."/>
            <person name="Glavina del Rio T."/>
            <person name="Hammon N."/>
            <person name="Israni S."/>
            <person name="Dalin E."/>
            <person name="Tice H."/>
            <person name="Pitluck S."/>
            <person name="Chain P."/>
            <person name="Malfatti S."/>
            <person name="Shin M."/>
            <person name="Vergez L."/>
            <person name="Schmutz J."/>
            <person name="Larimer F."/>
            <person name="Land M."/>
            <person name="Hauser L."/>
            <person name="Kyrpides N."/>
            <person name="Lykidis A."/>
            <person name="Parales R."/>
            <person name="Richardson P."/>
        </authorList>
    </citation>
    <scope>NUCLEOTIDE SEQUENCE [LARGE SCALE GENOMIC DNA]</scope>
    <source>
        <strain>ATCC 700007 / DSM 6899 / JCM 31910 / BCRC 17059 / LMG 24140 / F1</strain>
    </source>
</reference>
<dbReference type="EMBL" id="CP000712">
    <property type="protein sequence ID" value="ABQ80309.1"/>
    <property type="molecule type" value="Genomic_DNA"/>
</dbReference>
<dbReference type="SMR" id="A5W849"/>
<dbReference type="KEGG" id="ppf:Pput_4185"/>
<dbReference type="eggNOG" id="COG0264">
    <property type="taxonomic scope" value="Bacteria"/>
</dbReference>
<dbReference type="HOGENOM" id="CLU_047155_0_2_6"/>
<dbReference type="GO" id="GO:0005737">
    <property type="term" value="C:cytoplasm"/>
    <property type="evidence" value="ECO:0007669"/>
    <property type="project" value="UniProtKB-SubCell"/>
</dbReference>
<dbReference type="GO" id="GO:0003746">
    <property type="term" value="F:translation elongation factor activity"/>
    <property type="evidence" value="ECO:0007669"/>
    <property type="project" value="UniProtKB-UniRule"/>
</dbReference>
<dbReference type="CDD" id="cd14275">
    <property type="entry name" value="UBA_EF-Ts"/>
    <property type="match status" value="1"/>
</dbReference>
<dbReference type="FunFam" id="1.10.286.20:FF:000001">
    <property type="entry name" value="Elongation factor Ts"/>
    <property type="match status" value="1"/>
</dbReference>
<dbReference type="FunFam" id="1.10.8.10:FF:000001">
    <property type="entry name" value="Elongation factor Ts"/>
    <property type="match status" value="1"/>
</dbReference>
<dbReference type="Gene3D" id="1.10.286.20">
    <property type="match status" value="1"/>
</dbReference>
<dbReference type="Gene3D" id="1.10.8.10">
    <property type="entry name" value="DNA helicase RuvA subunit, C-terminal domain"/>
    <property type="match status" value="1"/>
</dbReference>
<dbReference type="Gene3D" id="3.30.479.20">
    <property type="entry name" value="Elongation factor Ts, dimerisation domain"/>
    <property type="match status" value="2"/>
</dbReference>
<dbReference type="HAMAP" id="MF_00050">
    <property type="entry name" value="EF_Ts"/>
    <property type="match status" value="1"/>
</dbReference>
<dbReference type="InterPro" id="IPR036402">
    <property type="entry name" value="EF-Ts_dimer_sf"/>
</dbReference>
<dbReference type="InterPro" id="IPR001816">
    <property type="entry name" value="Transl_elong_EFTs/EF1B"/>
</dbReference>
<dbReference type="InterPro" id="IPR014039">
    <property type="entry name" value="Transl_elong_EFTs/EF1B_dimer"/>
</dbReference>
<dbReference type="InterPro" id="IPR018101">
    <property type="entry name" value="Transl_elong_Ts_CS"/>
</dbReference>
<dbReference type="InterPro" id="IPR009060">
    <property type="entry name" value="UBA-like_sf"/>
</dbReference>
<dbReference type="NCBIfam" id="TIGR00116">
    <property type="entry name" value="tsf"/>
    <property type="match status" value="1"/>
</dbReference>
<dbReference type="PANTHER" id="PTHR11741">
    <property type="entry name" value="ELONGATION FACTOR TS"/>
    <property type="match status" value="1"/>
</dbReference>
<dbReference type="PANTHER" id="PTHR11741:SF0">
    <property type="entry name" value="ELONGATION FACTOR TS, MITOCHONDRIAL"/>
    <property type="match status" value="1"/>
</dbReference>
<dbReference type="Pfam" id="PF00889">
    <property type="entry name" value="EF_TS"/>
    <property type="match status" value="1"/>
</dbReference>
<dbReference type="SUPFAM" id="SSF54713">
    <property type="entry name" value="Elongation factor Ts (EF-Ts), dimerisation domain"/>
    <property type="match status" value="2"/>
</dbReference>
<dbReference type="SUPFAM" id="SSF46934">
    <property type="entry name" value="UBA-like"/>
    <property type="match status" value="1"/>
</dbReference>
<dbReference type="PROSITE" id="PS01126">
    <property type="entry name" value="EF_TS_1"/>
    <property type="match status" value="1"/>
</dbReference>
<dbReference type="PROSITE" id="PS01127">
    <property type="entry name" value="EF_TS_2"/>
    <property type="match status" value="1"/>
</dbReference>
<sequence>MAAITAALVKELRERTGEGMMDCKKALEKAGGDIEKAIDDMRASGAIKAAKKAGNVAAEGAIAVKTDGTSAVLLEVNSQTDFLALQDDFKNFVAESLEEAFAQKLTDAAPLIASREAAREALVAKCGENVNIRRLVRVEGDVVGAYLHGNKIGAVVVLKGGDVELAKNIAMHVAASNPEFLDSSEISAEAIEREKNVFLQLNADKIAGKPENIVENMINGRITKFKAEASLKEQAFVMNPEVKVGELAKKAGAEIVSFTYFKVGEGIEKPVDDFAAEVAAQVAAAKQ</sequence>
<feature type="chain" id="PRO_1000006155" description="Elongation factor Ts">
    <location>
        <begin position="1"/>
        <end position="287"/>
    </location>
</feature>
<feature type="region of interest" description="Involved in Mg(2+) ion dislocation from EF-Tu" evidence="1">
    <location>
        <begin position="80"/>
        <end position="83"/>
    </location>
</feature>